<protein>
    <recommendedName>
        <fullName>Histone H2AX</fullName>
        <shortName>H2a/x</shortName>
    </recommendedName>
    <alternativeName>
        <fullName>Histone H2A.X</fullName>
    </alternativeName>
</protein>
<accession>Q6GM86</accession>
<proteinExistence type="evidence at protein level"/>
<feature type="initiator methionine" description="Removed" evidence="2">
    <location>
        <position position="1"/>
    </location>
</feature>
<feature type="chain" id="PRO_0000055245" description="Histone H2AX">
    <location>
        <begin position="2"/>
        <end position="139"/>
    </location>
</feature>
<feature type="region of interest" description="Disordered" evidence="4">
    <location>
        <begin position="1"/>
        <end position="21"/>
    </location>
</feature>
<feature type="region of interest" description="Disordered" evidence="4">
    <location>
        <begin position="119"/>
        <end position="139"/>
    </location>
</feature>
<feature type="short sequence motif" description="[ST]-Q motif">
    <location>
        <begin position="136"/>
        <end position="137"/>
    </location>
</feature>
<feature type="compositionally biased region" description="Basic residues" evidence="4">
    <location>
        <begin position="7"/>
        <end position="19"/>
    </location>
</feature>
<feature type="modified residue" description="N-acetylserine" evidence="2">
    <location>
        <position position="2"/>
    </location>
</feature>
<feature type="modified residue" description="Phosphoserine" evidence="2">
    <location>
        <position position="2"/>
    </location>
</feature>
<feature type="modified residue" description="N6-lactoyllysine; alternate" evidence="1">
    <location>
        <position position="10"/>
    </location>
</feature>
<feature type="modified residue" description="Phosphoserine" evidence="5">
    <location>
        <position position="136"/>
    </location>
</feature>
<feature type="modified residue" description="Phosphotyrosine; by WSTF" evidence="6">
    <location>
        <position position="139"/>
    </location>
</feature>
<feature type="cross-link" description="Glycyl lysine isopeptide (Lys-Gly) (interchain with G-Cter in ubiquitin)" evidence="2">
    <location>
        <position position="14"/>
    </location>
</feature>
<feature type="cross-link" description="Glycyl lysine isopeptide (Lys-Gly) (interchain with G-Cter in ubiquitin)" evidence="2">
    <location>
        <position position="16"/>
    </location>
</feature>
<feature type="cross-link" description="Glycyl lysine isopeptide (Lys-Gly) (interchain with G-Cter in ubiquitin)" evidence="2">
    <location>
        <position position="120"/>
    </location>
</feature>
<comment type="function">
    <text evidence="2">Variant histone H2A which replaces conventional H2A in a subset of nucleosomes. Nucleosomes wrap and compact DNA into chromatin, limiting DNA accessibility to the cellular machineries which require DNA as a template. Histones thereby play a central role in transcription regulation, DNA repair, DNA replication and chromosomal stability. DNA accessibility is regulated via a complex set of post-translational modifications of histones, also called histone code, and nucleosome remodeling. Required for checkpoint-mediated arrest of cell cycle progression in response to low doses of ionizing radiation and for efficient repair of DNA double strand breaks (DSBs) specifically when modified by C-terminal phosphorylation (By similarity).</text>
</comment>
<comment type="subunit">
    <text evidence="2">The nucleosome is a histone octamer containing two molecules each of H2A, H2B, H3 and H4 assembled in one H3-H4 heterotetramer and two H2A-H2B heterodimers. The octamer wraps approximately 147 bp of DNA. Interacts with numerous proteins required for DNA damage signaling and repair when phosphorylated on Ser-136 (By similarity).</text>
</comment>
<comment type="subcellular location">
    <subcellularLocation>
        <location evidence="3">Nucleus</location>
    </subcellularLocation>
    <subcellularLocation>
        <location evidence="3">Chromosome</location>
    </subcellularLocation>
</comment>
<comment type="domain">
    <text>The [ST]-Q motif constitutes a recognition sequence for kinases from the PI3/PI4-kinase family.</text>
</comment>
<comment type="PTM">
    <text evidence="2 5 6">Phosphorylated. Phosphorylation of Ser-136 (H2AX139ph) occurs in response to DNA double strand breaks (DSBs) generated by exogenous genotoxic agents, by stalled replication forks and by meiotic recombination events. Phosphorylation is dependent on the DNA damage checkpoint kinases ATR and ATM, spreads on either side of a detected DSB site and may mark the surrounding chromatin for recruitment of proteins required for DNA damage signaling and repair. Widespread phosphorylation may also serve to amplify the damage signal or aid repair of persistent lesions. Dephosphorylation of Ser-136 is required for DNA DSB repair. Phosphorylation at Tyr-139 (H2AXY142ph) by baz1b/wstf determines the relative recruitment of either DNA repair or pro-apoptotic factors. Phosphorylation at Tyr-139 (H2AXY142ph) favors the recruitment of pro-apoptosis factors. In contrast, dephosphorylation of Tyr-139 by EYA proteins (eya1, eya2, eya3 or eya4) favors the recruitment of MDC1-containing DNA repair complexes to the tail of phosphorylated Ser-136 (H2AX139ph). Phosphorylated by VRK1 (By similarity).</text>
</comment>
<comment type="PTM">
    <text evidence="2">Monoubiquitination of Lys-120 (H2AXK119ub) by ring1 and rnf2/ring2 complex gives a specific tag for epigenetic transcriptional repression. Following DNA double-strand breaks (DSBs), it is ubiquitinated through 'Lys-63' linkage of ubiquitin moieties by the E2 ligase ube2n and the E3 ligases rnf8 and rnf168, leading to the recruitment of repair proteins to sites of DNA damage. Ubiquitination at Lys-14 and Lys-16 (H2AK13Ub and H2AK15Ub, respectively) in response to DNA damage is initiated by rnf168 that mediates monoubiquitination at these 2 sites, and 'Lys-63'-linked ubiquitin are then conjugated to monoubiquitin; rnf8 is able to extend 'Lys-63'-linked ubiquitin chains in vitro. H2AK119Ub and ionizing radiation-induced 'Lys-63'-linked ubiquitination (H2AK13Ub and H2AK15Ub) are distinct events (By similarity).</text>
</comment>
<comment type="similarity">
    <text evidence="7">Belongs to the histone H2A family.</text>
</comment>
<evidence type="ECO:0000250" key="1">
    <source>
        <dbReference type="UniProtKB" id="P0C0S5"/>
    </source>
</evidence>
<evidence type="ECO:0000250" key="2">
    <source>
        <dbReference type="UniProtKB" id="P16104"/>
    </source>
</evidence>
<evidence type="ECO:0000250" key="3">
    <source>
        <dbReference type="UniProtKB" id="P27661"/>
    </source>
</evidence>
<evidence type="ECO:0000256" key="4">
    <source>
        <dbReference type="SAM" id="MobiDB-lite"/>
    </source>
</evidence>
<evidence type="ECO:0000269" key="5">
    <source>
    </source>
</evidence>
<evidence type="ECO:0000269" key="6">
    <source>
    </source>
</evidence>
<evidence type="ECO:0000305" key="7"/>
<dbReference type="EMBL" id="BC074188">
    <property type="protein sequence ID" value="AAH74188.1"/>
    <property type="molecule type" value="mRNA"/>
</dbReference>
<dbReference type="EMDB" id="EMD-11912"/>
<dbReference type="EMDB" id="EMD-13070"/>
<dbReference type="EMDB" id="EMD-22693"/>
<dbReference type="EMDB" id="EMD-22694"/>
<dbReference type="EMDB" id="EMD-22695"/>
<dbReference type="EMDB" id="EMD-23103"/>
<dbReference type="EMDB" id="EMD-23631"/>
<dbReference type="EMDB" id="EMD-23632"/>
<dbReference type="EMDB" id="EMD-23823"/>
<dbReference type="EMDB" id="EMD-23824"/>
<dbReference type="EMDB" id="EMD-4712"/>
<dbReference type="EMDB" id="EMD-47427"/>
<dbReference type="EMDB" id="EMD-8140"/>
<dbReference type="SMR" id="Q6GM86"/>
<dbReference type="BioGRID" id="102691">
    <property type="interactions" value="4"/>
</dbReference>
<dbReference type="iPTMnet" id="Q6GM86"/>
<dbReference type="DNASU" id="444528"/>
<dbReference type="GeneID" id="444528"/>
<dbReference type="KEGG" id="xla:444528"/>
<dbReference type="AGR" id="Xenbase:XB-GENE-5719408"/>
<dbReference type="CTD" id="444528"/>
<dbReference type="Xenbase" id="XB-GENE-5719408">
    <property type="gene designation" value="h2ax.S"/>
</dbReference>
<dbReference type="OrthoDB" id="1104503at2759"/>
<dbReference type="Proteomes" id="UP000186698">
    <property type="component" value="Chromosome 7S"/>
</dbReference>
<dbReference type="Bgee" id="444528">
    <property type="expression patterns" value="Expressed in neurula embryo and 19 other cell types or tissues"/>
</dbReference>
<dbReference type="GO" id="GO:0005813">
    <property type="term" value="C:centrosome"/>
    <property type="evidence" value="ECO:0000250"/>
    <property type="project" value="UniProtKB"/>
</dbReference>
<dbReference type="GO" id="GO:0005694">
    <property type="term" value="C:chromosome"/>
    <property type="evidence" value="ECO:0000250"/>
    <property type="project" value="UniProtKB"/>
</dbReference>
<dbReference type="GO" id="GO:0000786">
    <property type="term" value="C:nucleosome"/>
    <property type="evidence" value="ECO:0000318"/>
    <property type="project" value="GO_Central"/>
</dbReference>
<dbReference type="GO" id="GO:0005634">
    <property type="term" value="C:nucleus"/>
    <property type="evidence" value="ECO:0000318"/>
    <property type="project" value="GO_Central"/>
</dbReference>
<dbReference type="GO" id="GO:0003677">
    <property type="term" value="F:DNA binding"/>
    <property type="evidence" value="ECO:0007669"/>
    <property type="project" value="UniProtKB-KW"/>
</dbReference>
<dbReference type="GO" id="GO:0046982">
    <property type="term" value="F:protein heterodimerization activity"/>
    <property type="evidence" value="ECO:0007669"/>
    <property type="project" value="InterPro"/>
</dbReference>
<dbReference type="GO" id="GO:0030527">
    <property type="term" value="F:structural constituent of chromatin"/>
    <property type="evidence" value="ECO:0000318"/>
    <property type="project" value="GO_Central"/>
</dbReference>
<dbReference type="GO" id="GO:0006310">
    <property type="term" value="P:DNA recombination"/>
    <property type="evidence" value="ECO:0007669"/>
    <property type="project" value="UniProtKB-KW"/>
</dbReference>
<dbReference type="GO" id="GO:0006281">
    <property type="term" value="P:DNA repair"/>
    <property type="evidence" value="ECO:0007669"/>
    <property type="project" value="UniProtKB-KW"/>
</dbReference>
<dbReference type="GO" id="GO:0031507">
    <property type="term" value="P:heterochromatin formation"/>
    <property type="evidence" value="ECO:0000318"/>
    <property type="project" value="GO_Central"/>
</dbReference>
<dbReference type="GO" id="GO:0051321">
    <property type="term" value="P:meiotic cell cycle"/>
    <property type="evidence" value="ECO:0007669"/>
    <property type="project" value="UniProtKB-KW"/>
</dbReference>
<dbReference type="CDD" id="cd00074">
    <property type="entry name" value="HFD_H2A"/>
    <property type="match status" value="1"/>
</dbReference>
<dbReference type="FunFam" id="1.10.20.10:FF:000004">
    <property type="entry name" value="Histone H2A"/>
    <property type="match status" value="1"/>
</dbReference>
<dbReference type="Gene3D" id="1.10.20.10">
    <property type="entry name" value="Histone, subunit A"/>
    <property type="match status" value="1"/>
</dbReference>
<dbReference type="InterPro" id="IPR009072">
    <property type="entry name" value="Histone-fold"/>
</dbReference>
<dbReference type="InterPro" id="IPR002119">
    <property type="entry name" value="Histone_H2A"/>
</dbReference>
<dbReference type="InterPro" id="IPR007125">
    <property type="entry name" value="Histone_H2A/H2B/H3"/>
</dbReference>
<dbReference type="InterPro" id="IPR032454">
    <property type="entry name" value="Histone_H2A_C"/>
</dbReference>
<dbReference type="InterPro" id="IPR032458">
    <property type="entry name" value="Histone_H2A_CS"/>
</dbReference>
<dbReference type="PANTHER" id="PTHR23430">
    <property type="entry name" value="HISTONE H2A"/>
    <property type="match status" value="1"/>
</dbReference>
<dbReference type="Pfam" id="PF00125">
    <property type="entry name" value="Histone"/>
    <property type="match status" value="1"/>
</dbReference>
<dbReference type="Pfam" id="PF16211">
    <property type="entry name" value="Histone_H2A_C"/>
    <property type="match status" value="1"/>
</dbReference>
<dbReference type="PRINTS" id="PR00620">
    <property type="entry name" value="HISTONEH2A"/>
</dbReference>
<dbReference type="SMART" id="SM00414">
    <property type="entry name" value="H2A"/>
    <property type="match status" value="1"/>
</dbReference>
<dbReference type="SUPFAM" id="SSF47113">
    <property type="entry name" value="Histone-fold"/>
    <property type="match status" value="1"/>
</dbReference>
<dbReference type="PROSITE" id="PS00046">
    <property type="entry name" value="HISTONE_H2A"/>
    <property type="match status" value="1"/>
</dbReference>
<organism>
    <name type="scientific">Xenopus laevis</name>
    <name type="common">African clawed frog</name>
    <dbReference type="NCBI Taxonomy" id="8355"/>
    <lineage>
        <taxon>Eukaryota</taxon>
        <taxon>Metazoa</taxon>
        <taxon>Chordata</taxon>
        <taxon>Craniata</taxon>
        <taxon>Vertebrata</taxon>
        <taxon>Euteleostomi</taxon>
        <taxon>Amphibia</taxon>
        <taxon>Batrachia</taxon>
        <taxon>Anura</taxon>
        <taxon>Pipoidea</taxon>
        <taxon>Pipidae</taxon>
        <taxon>Xenopodinae</taxon>
        <taxon>Xenopus</taxon>
        <taxon>Xenopus</taxon>
    </lineage>
</organism>
<sequence>MSGRGKAVSKTRAKAKTRSSRAGLQFPVGRVHRLLRKGNYAHRVGAGAPVYLAAVLEYLTAEILELAGNAARDNKKSRIIPRHLQLAVRNDEELNKLLGGVTIAQGGVLPNIQAVLLPKKSSGGVSTSGKKSSQQSQEY</sequence>
<keyword id="KW-0007">Acetylation</keyword>
<keyword id="KW-0131">Cell cycle</keyword>
<keyword id="KW-0158">Chromosome</keyword>
<keyword id="KW-0227">DNA damage</keyword>
<keyword id="KW-0233">DNA recombination</keyword>
<keyword id="KW-0234">DNA repair</keyword>
<keyword id="KW-0238">DNA-binding</keyword>
<keyword id="KW-1017">Isopeptide bond</keyword>
<keyword id="KW-0469">Meiosis</keyword>
<keyword id="KW-0544">Nucleosome core</keyword>
<keyword id="KW-0539">Nucleus</keyword>
<keyword id="KW-0597">Phosphoprotein</keyword>
<keyword id="KW-1185">Reference proteome</keyword>
<keyword id="KW-0832">Ubl conjugation</keyword>
<reference key="1">
    <citation type="submission" date="2004-06" db="EMBL/GenBank/DDBJ databases">
        <authorList>
            <consortium name="NIH - Xenopus Gene Collection (XGC) project"/>
        </authorList>
    </citation>
    <scope>NUCLEOTIDE SEQUENCE [LARGE SCALE MRNA]</scope>
    <source>
        <tissue>Kidney</tissue>
    </source>
</reference>
<reference key="2">
    <citation type="journal article" date="1999" name="J. Cell Biol.">
        <title>Megabase chromatin domains involved in DNA double-strand breaks in vivo.</title>
        <authorList>
            <person name="Rogakou E.P."/>
            <person name="Boon C."/>
            <person name="Redon C."/>
            <person name="Bonner W.M."/>
        </authorList>
    </citation>
    <scope>PHOSPHORYLATION AT SER-136</scope>
</reference>
<reference key="3">
    <citation type="journal article" date="2009" name="Nature">
        <title>WSTF regulates the H2A.X DNA damage response via a novel tyrosine kinase activity.</title>
        <authorList>
            <person name="Xiao A."/>
            <person name="Li H."/>
            <person name="Shechter D."/>
            <person name="Ahn S.H."/>
            <person name="Fabrizio L.A."/>
            <person name="Erdjument-Bromage H."/>
            <person name="Ishibe-Murakami S."/>
            <person name="Wang B."/>
            <person name="Tempst P."/>
            <person name="Hofmann K."/>
            <person name="Patel D.J."/>
            <person name="Elledge S.J."/>
            <person name="Allis C.D."/>
        </authorList>
    </citation>
    <scope>PHOSPHORYLATION AT TYR-139</scope>
</reference>
<name>H2AX_XENLA</name>
<gene>
    <name type="primary">h2ax</name>
</gene>